<evidence type="ECO:0000250" key="1"/>
<evidence type="ECO:0000250" key="2">
    <source>
        <dbReference type="UniProtKB" id="Q91DD5"/>
    </source>
</evidence>
<evidence type="ECO:0000305" key="3"/>
<comment type="function">
    <text>Prevents the establishment of cellular antiviral state by blocking the interferon-alpha/beta (IFN-alpha/beta) and IFN-gamma signaling pathways. Blocks the IFN-induced nuclear accumulation of host phosphorylated STAT1, by interacting with the STAT1-binding region of host importin alpha-1/KPNA1 protein, thereby inhibiting the latter. Without the activity of this protein, activated STAT1 would not enter the nucleus and be unable to activate IFN-induced genes. Plays a role in assembly of viral nucleocapsid and virion budding. May act as a minor matrix protein that plays a role in assembly of viral nucleocapsid and virion budding.</text>
</comment>
<comment type="subunit">
    <text evidence="2">Interacts with host importins KPNA1, KPNA5 and KPNA6. Interacts with host STAT1.</text>
</comment>
<comment type="subcellular location">
    <subcellularLocation>
        <location evidence="1">Virion membrane</location>
        <topology evidence="1">Peripheral membrane protein</topology>
    </subcellularLocation>
    <subcellularLocation>
        <location evidence="1">Host cell membrane</location>
        <topology evidence="1">Peripheral membrane protein</topology>
        <orientation evidence="1">Cytoplasmic side</orientation>
    </subcellularLocation>
    <subcellularLocation>
        <location evidence="1">Host endomembrane system</location>
        <topology evidence="1">Peripheral membrane protein</topology>
    </subcellularLocation>
    <text evidence="1">In virion, localizes on the intravirional side of the membrane. In the host cell, it is found associated with virus-induced membrane proliferation foci and to the plasma membrane where budding takes place (By similarity).</text>
</comment>
<comment type="similarity">
    <text evidence="3">Belongs to the filoviridae membrane-associated protein VP24 family.</text>
</comment>
<accession>Q77DB4</accession>
<protein>
    <recommendedName>
        <fullName>Membrane-associated protein VP24</fullName>
    </recommendedName>
    <alternativeName>
        <fullName>Reston VP24</fullName>
        <shortName>rVP24</shortName>
    </alternativeName>
</protein>
<sequence>MAKATGRYNLVPPKKDMEKGVIFSDLCNFLITQTLQGWKVYWAGIEFDVSQKGMALLTRLKTNDFAPAWAMTRNLFPHLFQNPNSVIQSPIWALRVILAAGLQDQLLDHSLVEPLTGALGLISDWLLTTTSTHFNLRTRSVKDQLSLRMLSLIRSNILQFINKLDALHVVNYNGLLSSIEIGTSTHTIIITRTNMGFLVEVQEPDKSAMNSKRPGPVKFSLLHESAFKPFTRVPQSGMQSLIMEFNSLLAI</sequence>
<gene>
    <name type="primary">VP24</name>
    <name type="ORF">REBOVgp6</name>
</gene>
<name>VP24_EBORR</name>
<organismHost>
    <name type="scientific">Epomops franqueti</name>
    <name type="common">Franquet's epauletted fruit bat</name>
    <name type="synonym">Epomophorus franqueti</name>
    <dbReference type="NCBI Taxonomy" id="77231"/>
</organismHost>
<organismHost>
    <name type="scientific">Homo sapiens</name>
    <name type="common">Human</name>
    <dbReference type="NCBI Taxonomy" id="9606"/>
</organismHost>
<organismHost>
    <name type="scientific">Myonycteris torquata</name>
    <name type="common">Little collared fruit bat</name>
    <dbReference type="NCBI Taxonomy" id="77243"/>
</organismHost>
<organismHost>
    <name type="scientific">Sus scrofa</name>
    <name type="common">Pig</name>
    <dbReference type="NCBI Taxonomy" id="9823"/>
</organismHost>
<dbReference type="EMBL" id="AF522874">
    <property type="protein sequence ID" value="AAN04453.1"/>
    <property type="molecule type" value="Genomic_RNA"/>
</dbReference>
<dbReference type="EMBL" id="AY769362">
    <property type="protein sequence ID" value="AAV48580.1"/>
    <property type="molecule type" value="Genomic_RNA"/>
</dbReference>
<dbReference type="RefSeq" id="NP_690586.1">
    <property type="nucleotide sequence ID" value="NC_004161.1"/>
</dbReference>
<dbReference type="SMR" id="Q77DB4"/>
<dbReference type="GeneID" id="955193"/>
<dbReference type="KEGG" id="vg:955193"/>
<dbReference type="Proteomes" id="UP000007207">
    <property type="component" value="Segment"/>
</dbReference>
<dbReference type="Proteomes" id="UP000138664">
    <property type="component" value="Genome"/>
</dbReference>
<dbReference type="GO" id="GO:0033645">
    <property type="term" value="C:host cell endomembrane system"/>
    <property type="evidence" value="ECO:0007669"/>
    <property type="project" value="UniProtKB-SubCell"/>
</dbReference>
<dbReference type="GO" id="GO:0020002">
    <property type="term" value="C:host cell plasma membrane"/>
    <property type="evidence" value="ECO:0007669"/>
    <property type="project" value="UniProtKB-SubCell"/>
</dbReference>
<dbReference type="GO" id="GO:0016020">
    <property type="term" value="C:membrane"/>
    <property type="evidence" value="ECO:0007669"/>
    <property type="project" value="UniProtKB-KW"/>
</dbReference>
<dbReference type="GO" id="GO:0055036">
    <property type="term" value="C:virion membrane"/>
    <property type="evidence" value="ECO:0007669"/>
    <property type="project" value="UniProtKB-SubCell"/>
</dbReference>
<dbReference type="GO" id="GO:0005198">
    <property type="term" value="F:structural molecule activity"/>
    <property type="evidence" value="ECO:0007669"/>
    <property type="project" value="InterPro"/>
</dbReference>
<dbReference type="GO" id="GO:0052170">
    <property type="term" value="P:symbiont-mediated suppression of host innate immune response"/>
    <property type="evidence" value="ECO:0007669"/>
    <property type="project" value="UniProtKB-KW"/>
</dbReference>
<dbReference type="GO" id="GO:0016032">
    <property type="term" value="P:viral process"/>
    <property type="evidence" value="ECO:0007669"/>
    <property type="project" value="InterPro"/>
</dbReference>
<dbReference type="InterPro" id="IPR009433">
    <property type="entry name" value="Filo_VP24"/>
</dbReference>
<dbReference type="Pfam" id="PF06389">
    <property type="entry name" value="Filo_VP24"/>
    <property type="match status" value="1"/>
</dbReference>
<dbReference type="PIRSF" id="PIRSF011355">
    <property type="entry name" value="VP24"/>
    <property type="match status" value="1"/>
</dbReference>
<organism>
    <name type="scientific">Reston ebolavirus (strain Reston-89)</name>
    <name type="common">REBOV</name>
    <name type="synonym">Reston Ebola virus</name>
    <dbReference type="NCBI Taxonomy" id="386032"/>
    <lineage>
        <taxon>Viruses</taxon>
        <taxon>Riboviria</taxon>
        <taxon>Orthornavirae</taxon>
        <taxon>Negarnaviricota</taxon>
        <taxon>Haploviricotina</taxon>
        <taxon>Monjiviricetes</taxon>
        <taxon>Mononegavirales</taxon>
        <taxon>Filoviridae</taxon>
        <taxon>Orthoebolavirus</taxon>
        <taxon>Orthoebolavirus restonense</taxon>
        <taxon>Reston ebolavirus</taxon>
    </lineage>
</organism>
<keyword id="KW-1032">Host cell membrane</keyword>
<keyword id="KW-1043">Host membrane</keyword>
<keyword id="KW-0945">Host-virus interaction</keyword>
<keyword id="KW-1090">Inhibition of host innate immune response by virus</keyword>
<keyword id="KW-0922">Interferon antiviral system evasion</keyword>
<keyword id="KW-0472">Membrane</keyword>
<keyword id="KW-0899">Viral immunoevasion</keyword>
<keyword id="KW-0946">Virion</keyword>
<proteinExistence type="inferred from homology"/>
<reference key="1">
    <citation type="journal article" date="2002" name="Virus Res.">
        <title>Molecular characterization of an isolate from the 1989/90 epizootic of Ebola virus Reston among macaques imported into the United States.</title>
        <authorList>
            <person name="Groseth A."/>
            <person name="Stroeher U."/>
            <person name="Theriault S."/>
            <person name="Feldmann H."/>
        </authorList>
    </citation>
    <scope>NUCLEOTIDE SEQUENCE [GENOMIC RNA]</scope>
</reference>
<reference key="2">
    <citation type="journal article" date="2005" name="Virology">
        <title>A reconstituted replication and transcription system for Ebola virus Reston and comparison with Ebola virus Zaire.</title>
        <authorList>
            <person name="Boehmann Y."/>
            <person name="Enterlein S."/>
            <person name="Randolf A."/>
            <person name="Muehlberger E.I."/>
        </authorList>
    </citation>
    <scope>NUCLEOTIDE SEQUENCE [GENOMIC RNA]</scope>
</reference>
<feature type="chain" id="PRO_0000245068" description="Membrane-associated protein VP24">
    <location>
        <begin position="1"/>
        <end position="251"/>
    </location>
</feature>